<keyword id="KW-0963">Cytoplasm</keyword>
<keyword id="KW-0378">Hydrolase</keyword>
<keyword id="KW-0540">Nuclease</keyword>
<keyword id="KW-0690">Ribosome biogenesis</keyword>
<reference key="1">
    <citation type="submission" date="2007-02" db="EMBL/GenBank/DDBJ databases">
        <title>Complete sequence of Mycobacterium sp. JLS.</title>
        <authorList>
            <consortium name="US DOE Joint Genome Institute"/>
            <person name="Copeland A."/>
            <person name="Lucas S."/>
            <person name="Lapidus A."/>
            <person name="Barry K."/>
            <person name="Detter J.C."/>
            <person name="Glavina del Rio T."/>
            <person name="Hammon N."/>
            <person name="Israni S."/>
            <person name="Dalin E."/>
            <person name="Tice H."/>
            <person name="Pitluck S."/>
            <person name="Chain P."/>
            <person name="Malfatti S."/>
            <person name="Shin M."/>
            <person name="Vergez L."/>
            <person name="Schmutz J."/>
            <person name="Larimer F."/>
            <person name="Land M."/>
            <person name="Hauser L."/>
            <person name="Kyrpides N."/>
            <person name="Mikhailova N."/>
            <person name="Miller C.D."/>
            <person name="Anderson A.J."/>
            <person name="Sims R.C."/>
            <person name="Richardson P."/>
        </authorList>
    </citation>
    <scope>NUCLEOTIDE SEQUENCE [LARGE SCALE GENOMIC DNA]</scope>
    <source>
        <strain>JLS</strain>
    </source>
</reference>
<sequence>MTDSDHRLPDRPGEGDPGRGRRIGIDVGCVRVGVATSDPDGVLATPVETVRREKSSDRHVRRLAQLVTELEAVEVVVGLPRTLADRTGPAAHDAIDVAEALARRIAPVPVRMADERLTTVSAQRSLREAGVRAKGQRAMIDQVAAVGILQSWLDQRRAALAAPGEGGHG</sequence>
<gene>
    <name type="ordered locus">Mjls_2388</name>
</gene>
<name>YQGF_MYCSJ</name>
<protein>
    <recommendedName>
        <fullName evidence="1">Putative pre-16S rRNA nuclease</fullName>
        <ecNumber evidence="1">3.1.-.-</ecNumber>
    </recommendedName>
</protein>
<feature type="chain" id="PRO_1000061537" description="Putative pre-16S rRNA nuclease">
    <location>
        <begin position="1"/>
        <end position="169"/>
    </location>
</feature>
<feature type="region of interest" description="Disordered" evidence="2">
    <location>
        <begin position="1"/>
        <end position="22"/>
    </location>
</feature>
<feature type="compositionally biased region" description="Basic and acidic residues" evidence="2">
    <location>
        <begin position="1"/>
        <end position="19"/>
    </location>
</feature>
<comment type="function">
    <text evidence="1">Could be a nuclease involved in processing of the 5'-end of pre-16S rRNA.</text>
</comment>
<comment type="subcellular location">
    <subcellularLocation>
        <location evidence="1">Cytoplasm</location>
    </subcellularLocation>
</comment>
<comment type="similarity">
    <text evidence="1">Belongs to the YqgF nuclease family.</text>
</comment>
<evidence type="ECO:0000255" key="1">
    <source>
        <dbReference type="HAMAP-Rule" id="MF_00651"/>
    </source>
</evidence>
<evidence type="ECO:0000256" key="2">
    <source>
        <dbReference type="SAM" id="MobiDB-lite"/>
    </source>
</evidence>
<accession>A3PZ45</accession>
<dbReference type="EC" id="3.1.-.-" evidence="1"/>
<dbReference type="EMBL" id="CP000580">
    <property type="protein sequence ID" value="ABN98172.1"/>
    <property type="molecule type" value="Genomic_DNA"/>
</dbReference>
<dbReference type="SMR" id="A3PZ45"/>
<dbReference type="KEGG" id="mjl:Mjls_2388"/>
<dbReference type="HOGENOM" id="CLU_098240_0_1_11"/>
<dbReference type="BioCyc" id="MSP164757:G1G8C-2407-MONOMER"/>
<dbReference type="GO" id="GO:0005829">
    <property type="term" value="C:cytosol"/>
    <property type="evidence" value="ECO:0007669"/>
    <property type="project" value="TreeGrafter"/>
</dbReference>
<dbReference type="GO" id="GO:0004518">
    <property type="term" value="F:nuclease activity"/>
    <property type="evidence" value="ECO:0007669"/>
    <property type="project" value="UniProtKB-KW"/>
</dbReference>
<dbReference type="GO" id="GO:0000967">
    <property type="term" value="P:rRNA 5'-end processing"/>
    <property type="evidence" value="ECO:0007669"/>
    <property type="project" value="UniProtKB-UniRule"/>
</dbReference>
<dbReference type="CDD" id="cd16964">
    <property type="entry name" value="YqgF"/>
    <property type="match status" value="1"/>
</dbReference>
<dbReference type="FunFam" id="3.30.420.140:FF:000005">
    <property type="entry name" value="Putative pre-16S rRNA nuclease"/>
    <property type="match status" value="1"/>
</dbReference>
<dbReference type="Gene3D" id="3.30.420.140">
    <property type="entry name" value="YqgF/RNase H-like domain"/>
    <property type="match status" value="1"/>
</dbReference>
<dbReference type="HAMAP" id="MF_00651">
    <property type="entry name" value="Nuclease_YqgF"/>
    <property type="match status" value="1"/>
</dbReference>
<dbReference type="InterPro" id="IPR012337">
    <property type="entry name" value="RNaseH-like_sf"/>
</dbReference>
<dbReference type="InterPro" id="IPR005227">
    <property type="entry name" value="YqgF"/>
</dbReference>
<dbReference type="InterPro" id="IPR006641">
    <property type="entry name" value="YqgF/RNaseH-like_dom"/>
</dbReference>
<dbReference type="InterPro" id="IPR037027">
    <property type="entry name" value="YqgF/RNaseH-like_dom_sf"/>
</dbReference>
<dbReference type="NCBIfam" id="TIGR00250">
    <property type="entry name" value="RNAse_H_YqgF"/>
    <property type="match status" value="1"/>
</dbReference>
<dbReference type="PANTHER" id="PTHR33317">
    <property type="entry name" value="POLYNUCLEOTIDYL TRANSFERASE, RIBONUCLEASE H-LIKE SUPERFAMILY PROTEIN"/>
    <property type="match status" value="1"/>
</dbReference>
<dbReference type="PANTHER" id="PTHR33317:SF4">
    <property type="entry name" value="POLYNUCLEOTIDYL TRANSFERASE, RIBONUCLEASE H-LIKE SUPERFAMILY PROTEIN"/>
    <property type="match status" value="1"/>
</dbReference>
<dbReference type="Pfam" id="PF03652">
    <property type="entry name" value="RuvX"/>
    <property type="match status" value="1"/>
</dbReference>
<dbReference type="SMART" id="SM00732">
    <property type="entry name" value="YqgFc"/>
    <property type="match status" value="1"/>
</dbReference>
<dbReference type="SUPFAM" id="SSF53098">
    <property type="entry name" value="Ribonuclease H-like"/>
    <property type="match status" value="1"/>
</dbReference>
<organism>
    <name type="scientific">Mycobacterium sp. (strain JLS)</name>
    <dbReference type="NCBI Taxonomy" id="164757"/>
    <lineage>
        <taxon>Bacteria</taxon>
        <taxon>Bacillati</taxon>
        <taxon>Actinomycetota</taxon>
        <taxon>Actinomycetes</taxon>
        <taxon>Mycobacteriales</taxon>
        <taxon>Mycobacteriaceae</taxon>
        <taxon>Mycobacterium</taxon>
    </lineage>
</organism>
<proteinExistence type="inferred from homology"/>